<comment type="function">
    <text evidence="2">Protects cells and enzymes from oxidative damage, by catalyzing the reduction of hydrogen peroxide, lipid peroxides and organic hydroperoxide, by glutathione.</text>
</comment>
<comment type="catalytic activity">
    <reaction evidence="2">
        <text>2 glutathione + H2O2 = glutathione disulfide + 2 H2O</text>
        <dbReference type="Rhea" id="RHEA:16833"/>
        <dbReference type="ChEBI" id="CHEBI:15377"/>
        <dbReference type="ChEBI" id="CHEBI:16240"/>
        <dbReference type="ChEBI" id="CHEBI:57925"/>
        <dbReference type="ChEBI" id="CHEBI:58297"/>
        <dbReference type="EC" id="1.11.1.9"/>
    </reaction>
</comment>
<comment type="catalytic activity">
    <reaction evidence="2">
        <text>tert-butyl hydroperoxide + 2 glutathione = tert-butanol + glutathione disulfide + H2O</text>
        <dbReference type="Rhea" id="RHEA:69412"/>
        <dbReference type="ChEBI" id="CHEBI:15377"/>
        <dbReference type="ChEBI" id="CHEBI:45895"/>
        <dbReference type="ChEBI" id="CHEBI:57925"/>
        <dbReference type="ChEBI" id="CHEBI:58297"/>
        <dbReference type="ChEBI" id="CHEBI:64090"/>
    </reaction>
</comment>
<comment type="subunit">
    <text evidence="1">Homotetramer.</text>
</comment>
<comment type="subcellular location">
    <subcellularLocation>
        <location evidence="1">Secreted</location>
    </subcellularLocation>
</comment>
<comment type="tissue specificity">
    <text>Secreted in plasma.</text>
</comment>
<comment type="similarity">
    <text evidence="4">Belongs to the glutathione peroxidase family.</text>
</comment>
<sequence length="226" mass="25580">MARLLQASCLLSLLLAGFLPQSRGQDKSKMDCHGGVSGTIYEYGALTIDGEEYTPFKQYIGKYVLFVNVASYUGLTGQYIELNALQEELAPFGLDLLGFPCNQFGKQEPGENSEILPSLKYVRPGGGFVPNFQLFEKGDVNGEKEQKFYTFLKNSCPPTSELLGTSDRLFWEPMKVHDIRWNFEKFLVGPDGIPVMRWHHRTTISNVKMDILSYMRRQAALGVKRK</sequence>
<protein>
    <recommendedName>
        <fullName evidence="2">Glutathione peroxidase 3</fullName>
        <shortName>GPx-3</shortName>
        <shortName>GSHPx-3</shortName>
        <ecNumber evidence="2">1.11.1.9</ecNumber>
    </recommendedName>
    <alternativeName>
        <fullName>Plasma glutathione peroxidase</fullName>
        <shortName>GPx-P</shortName>
        <shortName>GSHPx-P</shortName>
    </alternativeName>
</protein>
<name>GPX3_SAPAP</name>
<organism>
    <name type="scientific">Sapajus apella</name>
    <name type="common">Brown-capped capuchin</name>
    <name type="synonym">Cebus apella</name>
    <dbReference type="NCBI Taxonomy" id="9515"/>
    <lineage>
        <taxon>Eukaryota</taxon>
        <taxon>Metazoa</taxon>
        <taxon>Chordata</taxon>
        <taxon>Craniata</taxon>
        <taxon>Vertebrata</taxon>
        <taxon>Euteleostomi</taxon>
        <taxon>Mammalia</taxon>
        <taxon>Eutheria</taxon>
        <taxon>Euarchontoglires</taxon>
        <taxon>Primates</taxon>
        <taxon>Haplorrhini</taxon>
        <taxon>Platyrrhini</taxon>
        <taxon>Cebidae</taxon>
        <taxon>Cebinae</taxon>
        <taxon>Sapajus</taxon>
    </lineage>
</organism>
<gene>
    <name evidence="2" type="primary">GPX3</name>
</gene>
<proteinExistence type="evidence at transcript level"/>
<evidence type="ECO:0000250" key="1"/>
<evidence type="ECO:0000250" key="2">
    <source>
        <dbReference type="UniProtKB" id="P22352"/>
    </source>
</evidence>
<evidence type="ECO:0000255" key="3"/>
<evidence type="ECO:0000305" key="4"/>
<accession>Q4AEH3</accession>
<reference key="1">
    <citation type="journal article" date="2005" name="Comp. Biochem. Physiol.">
        <title>Structure, gene expression, and evolution of primate glutathione peroxidases.</title>
        <authorList>
            <person name="Fukuhara R."/>
            <person name="Kageyama T."/>
        </authorList>
    </citation>
    <scope>NUCLEOTIDE SEQUENCE [MRNA]</scope>
</reference>
<feature type="signal peptide" evidence="3">
    <location>
        <begin position="1"/>
        <end position="24"/>
    </location>
</feature>
<feature type="chain" id="PRO_0000042604" description="Glutathione peroxidase 3">
    <location>
        <begin position="25"/>
        <end position="226"/>
    </location>
</feature>
<feature type="active site" evidence="1">
    <location>
        <position position="73"/>
    </location>
</feature>
<feature type="non-standard amino acid" description="Selenocysteine">
    <location>
        <position position="73"/>
    </location>
</feature>
<dbReference type="EC" id="1.11.1.9" evidence="2"/>
<dbReference type="EMBL" id="AB121009">
    <property type="protein sequence ID" value="BAE17017.1"/>
    <property type="molecule type" value="mRNA"/>
</dbReference>
<dbReference type="PeroxiBase" id="3640">
    <property type="entry name" value="CapGPx03"/>
</dbReference>
<dbReference type="Proteomes" id="UP000504640">
    <property type="component" value="Unplaced"/>
</dbReference>
<dbReference type="GO" id="GO:0005615">
    <property type="term" value="C:extracellular space"/>
    <property type="evidence" value="ECO:0000250"/>
    <property type="project" value="UniProtKB"/>
</dbReference>
<dbReference type="GO" id="GO:0004602">
    <property type="term" value="F:glutathione peroxidase activity"/>
    <property type="evidence" value="ECO:0000250"/>
    <property type="project" value="UniProtKB"/>
</dbReference>
<dbReference type="GO" id="GO:0042802">
    <property type="term" value="F:identical protein binding"/>
    <property type="evidence" value="ECO:0000250"/>
    <property type="project" value="UniProtKB"/>
</dbReference>
<dbReference type="GO" id="GO:0008430">
    <property type="term" value="F:selenium binding"/>
    <property type="evidence" value="ECO:0000250"/>
    <property type="project" value="UniProtKB"/>
</dbReference>
<dbReference type="GO" id="GO:0042744">
    <property type="term" value="P:hydrogen peroxide catabolic process"/>
    <property type="evidence" value="ECO:0007669"/>
    <property type="project" value="TreeGrafter"/>
</dbReference>
<dbReference type="GO" id="GO:0006979">
    <property type="term" value="P:response to oxidative stress"/>
    <property type="evidence" value="ECO:0007669"/>
    <property type="project" value="InterPro"/>
</dbReference>
<dbReference type="CDD" id="cd00340">
    <property type="entry name" value="GSH_Peroxidase"/>
    <property type="match status" value="1"/>
</dbReference>
<dbReference type="FunFam" id="3.40.30.10:FF:000112">
    <property type="entry name" value="Glutathione peroxidase"/>
    <property type="match status" value="1"/>
</dbReference>
<dbReference type="Gene3D" id="3.40.30.10">
    <property type="entry name" value="Glutaredoxin"/>
    <property type="match status" value="1"/>
</dbReference>
<dbReference type="InterPro" id="IPR000889">
    <property type="entry name" value="Glutathione_peroxidase"/>
</dbReference>
<dbReference type="InterPro" id="IPR029759">
    <property type="entry name" value="GPX_AS"/>
</dbReference>
<dbReference type="InterPro" id="IPR029760">
    <property type="entry name" value="GPX_CS"/>
</dbReference>
<dbReference type="InterPro" id="IPR036249">
    <property type="entry name" value="Thioredoxin-like_sf"/>
</dbReference>
<dbReference type="PANTHER" id="PTHR11592">
    <property type="entry name" value="GLUTATHIONE PEROXIDASE"/>
    <property type="match status" value="1"/>
</dbReference>
<dbReference type="PANTHER" id="PTHR11592:SF32">
    <property type="entry name" value="GLUTATHIONE PEROXIDASE 3"/>
    <property type="match status" value="1"/>
</dbReference>
<dbReference type="Pfam" id="PF00255">
    <property type="entry name" value="GSHPx"/>
    <property type="match status" value="1"/>
</dbReference>
<dbReference type="PIRSF" id="PIRSF000303">
    <property type="entry name" value="Glutathion_perox"/>
    <property type="match status" value="1"/>
</dbReference>
<dbReference type="PRINTS" id="PR01011">
    <property type="entry name" value="GLUTPROXDASE"/>
</dbReference>
<dbReference type="SUPFAM" id="SSF52833">
    <property type="entry name" value="Thioredoxin-like"/>
    <property type="match status" value="1"/>
</dbReference>
<dbReference type="PROSITE" id="PS00460">
    <property type="entry name" value="GLUTATHIONE_PEROXID_1"/>
    <property type="match status" value="1"/>
</dbReference>
<dbReference type="PROSITE" id="PS00763">
    <property type="entry name" value="GLUTATHIONE_PEROXID_2"/>
    <property type="match status" value="1"/>
</dbReference>
<dbReference type="PROSITE" id="PS51355">
    <property type="entry name" value="GLUTATHIONE_PEROXID_3"/>
    <property type="match status" value="1"/>
</dbReference>
<keyword id="KW-0560">Oxidoreductase</keyword>
<keyword id="KW-0575">Peroxidase</keyword>
<keyword id="KW-1185">Reference proteome</keyword>
<keyword id="KW-0964">Secreted</keyword>
<keyword id="KW-0712">Selenocysteine</keyword>
<keyword id="KW-0732">Signal</keyword>